<organism>
    <name type="scientific">Mycolicibacterium smegmatis (strain ATCC 700084 / mc(2)155)</name>
    <name type="common">Mycobacterium smegmatis</name>
    <dbReference type="NCBI Taxonomy" id="246196"/>
    <lineage>
        <taxon>Bacteria</taxon>
        <taxon>Bacillati</taxon>
        <taxon>Actinomycetota</taxon>
        <taxon>Actinomycetes</taxon>
        <taxon>Mycobacteriales</taxon>
        <taxon>Mycobacteriaceae</taxon>
        <taxon>Mycolicibacterium</taxon>
    </lineage>
</organism>
<reference key="1">
    <citation type="submission" date="2006-10" db="EMBL/GenBank/DDBJ databases">
        <authorList>
            <person name="Fleischmann R.D."/>
            <person name="Dodson R.J."/>
            <person name="Haft D.H."/>
            <person name="Merkel J.S."/>
            <person name="Nelson W.C."/>
            <person name="Fraser C.M."/>
        </authorList>
    </citation>
    <scope>NUCLEOTIDE SEQUENCE [LARGE SCALE GENOMIC DNA]</scope>
    <source>
        <strain>ATCC 700084 / mc(2)155</strain>
    </source>
</reference>
<reference key="2">
    <citation type="journal article" date="2007" name="Genome Biol.">
        <title>Interrupted coding sequences in Mycobacterium smegmatis: authentic mutations or sequencing errors?</title>
        <authorList>
            <person name="Deshayes C."/>
            <person name="Perrodou E."/>
            <person name="Gallien S."/>
            <person name="Euphrasie D."/>
            <person name="Schaeffer C."/>
            <person name="Van-Dorsselaer A."/>
            <person name="Poch O."/>
            <person name="Lecompte O."/>
            <person name="Reyrat J.-M."/>
        </authorList>
    </citation>
    <scope>NUCLEOTIDE SEQUENCE [LARGE SCALE GENOMIC DNA]</scope>
    <source>
        <strain>ATCC 700084 / mc(2)155</strain>
    </source>
</reference>
<reference key="3">
    <citation type="journal article" date="2009" name="Genome Res.">
        <title>Ortho-proteogenomics: multiple proteomes investigation through orthology and a new MS-based protocol.</title>
        <authorList>
            <person name="Gallien S."/>
            <person name="Perrodou E."/>
            <person name="Carapito C."/>
            <person name="Deshayes C."/>
            <person name="Reyrat J.-M."/>
            <person name="Van Dorsselaer A."/>
            <person name="Poch O."/>
            <person name="Schaeffer C."/>
            <person name="Lecompte O."/>
        </authorList>
    </citation>
    <scope>NUCLEOTIDE SEQUENCE [LARGE SCALE GENOMIC DNA]</scope>
    <scope>IDENTIFICATION BY MASS SPECTROMETRY [LARGE SCALE ANALYSIS]</scope>
    <source>
        <strain>ATCC 700084 / mc(2)155</strain>
    </source>
</reference>
<reference key="4">
    <citation type="journal article" date="2018" name="Front. Microbiol.">
        <title>Identification of Enolase as the Target of 2-Aminothiazoles in Mycobacterium tuberculosis.</title>
        <authorList>
            <person name="Wescott H.H."/>
            <person name="Zuniga E.S."/>
            <person name="Bajpai A."/>
            <person name="Trujillo C."/>
            <person name="Ehrt S."/>
            <person name="Schnappinger D."/>
            <person name="Roberts D.M."/>
            <person name="Parish T."/>
        </authorList>
    </citation>
    <scope>IDENTIFICATION BY MASS SPECTROMETRY</scope>
    <scope>INTERACTION WITH 2-AMINOTHIAZOLE ANTIBIOTICS</scope>
    <source>
        <strain>ATCC 700084 / mc(2)155</strain>
    </source>
</reference>
<keyword id="KW-0002">3D-structure</keyword>
<keyword id="KW-0066">ATP synthesis</keyword>
<keyword id="KW-1003">Cell membrane</keyword>
<keyword id="KW-0138">CF(0)</keyword>
<keyword id="KW-0375">Hydrogen ion transport</keyword>
<keyword id="KW-0406">Ion transport</keyword>
<keyword id="KW-0472">Membrane</keyword>
<keyword id="KW-0511">Multifunctional enzyme</keyword>
<keyword id="KW-1185">Reference proteome</keyword>
<keyword id="KW-0812">Transmembrane</keyword>
<keyword id="KW-1133">Transmembrane helix</keyword>
<keyword id="KW-0813">Transport</keyword>
<protein>
    <recommendedName>
        <fullName>ATP synthase subunit b-delta</fullName>
    </recommendedName>
    <domain>
        <recommendedName>
            <fullName>ATP synthase subunit b</fullName>
        </recommendedName>
        <alternativeName>
            <fullName>ATP synthase F(0) sector subunit b 2</fullName>
        </alternativeName>
        <alternativeName>
            <fullName>ATPase subunit I 2</fullName>
        </alternativeName>
        <alternativeName>
            <fullName>F-type ATPase subunit b 2</fullName>
            <shortName>F-ATPase subunit b 2</shortName>
        </alternativeName>
    </domain>
    <domain>
        <recommendedName>
            <fullName>ATP synthase subunit delta</fullName>
        </recommendedName>
        <alternativeName>
            <fullName>ATP synthase F(1) sector subunit delta</fullName>
        </alternativeName>
        <alternativeName>
            <fullName>F-type ATPase subunit delta</fullName>
            <shortName>F-ATPase subunit delta</shortName>
        </alternativeName>
    </domain>
</protein>
<accession>A0R203</accession>
<accession>I7G6D5</accession>
<feature type="chain" id="PRO_0000368892" description="ATP synthase subunit b-delta">
    <location>
        <begin position="1"/>
        <end position="445"/>
    </location>
</feature>
<feature type="transmembrane region" description="Helical" evidence="2">
    <location>
        <begin position="3"/>
        <end position="23"/>
    </location>
</feature>
<feature type="region of interest" description="ATP synthase subunit b">
    <location>
        <begin position="1"/>
        <end position="168"/>
    </location>
</feature>
<feature type="region of interest" description="ATP synthase subunit delta">
    <location>
        <begin position="169"/>
        <end position="445"/>
    </location>
</feature>
<feature type="helix" evidence="7">
    <location>
        <begin position="2"/>
        <end position="21"/>
    </location>
</feature>
<feature type="helix" evidence="7">
    <location>
        <begin position="23"/>
        <end position="136"/>
    </location>
</feature>
<feature type="helix" evidence="7">
    <location>
        <begin position="140"/>
        <end position="156"/>
    </location>
</feature>
<feature type="helix" evidence="7">
    <location>
        <begin position="174"/>
        <end position="190"/>
    </location>
</feature>
<feature type="helix" evidence="6">
    <location>
        <begin position="191"/>
        <end position="193"/>
    </location>
</feature>
<feature type="helix" evidence="7">
    <location>
        <begin position="196"/>
        <end position="215"/>
    </location>
</feature>
<feature type="helix" evidence="7">
    <location>
        <begin position="217"/>
        <end position="224"/>
    </location>
</feature>
<feature type="strand" evidence="5">
    <location>
        <begin position="228"/>
        <end position="230"/>
    </location>
</feature>
<feature type="helix" evidence="7">
    <location>
        <begin position="231"/>
        <end position="241"/>
    </location>
</feature>
<feature type="turn" evidence="7">
    <location>
        <begin position="242"/>
        <end position="244"/>
    </location>
</feature>
<feature type="helix" evidence="7">
    <location>
        <begin position="247"/>
        <end position="258"/>
    </location>
</feature>
<feature type="helix" evidence="7">
    <location>
        <begin position="264"/>
        <end position="286"/>
    </location>
</feature>
<feature type="helix" evidence="7">
    <location>
        <begin position="289"/>
        <end position="304"/>
    </location>
</feature>
<feature type="helix" evidence="7">
    <location>
        <begin position="307"/>
        <end position="314"/>
    </location>
</feature>
<feature type="strand" evidence="7">
    <location>
        <begin position="316"/>
        <end position="318"/>
    </location>
</feature>
<feature type="helix" evidence="7">
    <location>
        <begin position="320"/>
        <end position="330"/>
    </location>
</feature>
<feature type="turn" evidence="7">
    <location>
        <begin position="331"/>
        <end position="333"/>
    </location>
</feature>
<feature type="strand" evidence="7">
    <location>
        <begin position="334"/>
        <end position="336"/>
    </location>
</feature>
<feature type="helix" evidence="7">
    <location>
        <begin position="339"/>
        <end position="350"/>
    </location>
</feature>
<feature type="helix" evidence="7">
    <location>
        <begin position="357"/>
        <end position="371"/>
    </location>
</feature>
<feature type="strand" evidence="7">
    <location>
        <begin position="375"/>
        <end position="383"/>
    </location>
</feature>
<feature type="helix" evidence="7">
    <location>
        <begin position="387"/>
        <end position="401"/>
    </location>
</feature>
<feature type="strand" evidence="7">
    <location>
        <begin position="405"/>
        <end position="411"/>
    </location>
</feature>
<feature type="helix" evidence="7">
    <location>
        <begin position="413"/>
        <end position="415"/>
    </location>
</feature>
<feature type="strand" evidence="7">
    <location>
        <begin position="417"/>
        <end position="423"/>
    </location>
</feature>
<feature type="strand" evidence="7">
    <location>
        <begin position="426"/>
        <end position="429"/>
    </location>
</feature>
<feature type="helix" evidence="7">
    <location>
        <begin position="432"/>
        <end position="442"/>
    </location>
</feature>
<comment type="function">
    <text evidence="1">F(1)F(0) ATP synthase produces ATP from ADP in the presence of a proton or sodium gradient. F-type ATPases consist of two structural domains, F(1) containing the extramembraneous catalytic core and F(0) containing the membrane proton channel, linked together by a central stalk and a peripheral stalk. During catalysis, ATP synthesis in the catalytic domain of F(1) is coupled via a rotary mechanism of the central stalk subunits to proton translocation (By similarity).</text>
</comment>
<comment type="function">
    <text evidence="1">This fusion protein includes a component of the F(0) channel (subunit b) and of the F(1) subunit (subunit delta). Two copies of subunit b and one of delta together form the peripheral 'stator' stalk which links F(1) to F(0) (By similarity).</text>
</comment>
<comment type="subunit">
    <text evidence="1">F-type ATPases have 2 components, F(1) - the catalytic core - and F(0) - the membrane proton channel. F(1) has five subunits: alpha(3), beta(3), gamma(1), delta(1), epsilon(1). F(0) has three main subunits: a(1), b(2) and c(10-14). The alpha and beta chains form an alternating ring which encloses part of the gamma chain. F(1) is attached to F(0) by a central stalk formed by the gamma and epsilon chains, while a peripheral stalk is formed by the delta and b chains (By similarity).</text>
</comment>
<comment type="subcellular location">
    <subcellularLocation>
        <location evidence="1">Cell membrane</location>
        <topology evidence="1">Single-pass membrane protein</topology>
    </subcellularLocation>
</comment>
<comment type="miscellaneous">
    <text evidence="3">Binds 2-aminothiazole antibiotics, which are antitubercular agents (PubMed:30416491).</text>
</comment>
<comment type="similarity">
    <text evidence="4">In the N-terminal section; belongs to the ATPase B chain family.</text>
</comment>
<comment type="similarity">
    <text evidence="4">In the C-terminal section; belongs to the ATPase delta chain family.</text>
</comment>
<gene>
    <name type="primary">atpFH</name>
    <name type="synonym">atpF</name>
    <name type="synonym">atpH</name>
    <name type="ordered locus">MSMEG_4939</name>
    <name type="ordered locus">MSMEI_4812</name>
</gene>
<evidence type="ECO:0000250" key="1"/>
<evidence type="ECO:0000255" key="2"/>
<evidence type="ECO:0000269" key="3">
    <source>
    </source>
</evidence>
<evidence type="ECO:0000305" key="4"/>
<evidence type="ECO:0007829" key="5">
    <source>
        <dbReference type="PDB" id="7JG7"/>
    </source>
</evidence>
<evidence type="ECO:0007829" key="6">
    <source>
        <dbReference type="PDB" id="7NJR"/>
    </source>
</evidence>
<evidence type="ECO:0007829" key="7">
    <source>
        <dbReference type="PDB" id="7NJS"/>
    </source>
</evidence>
<proteinExistence type="evidence at protein level"/>
<name>ATPFD_MYCS2</name>
<dbReference type="EMBL" id="CP000480">
    <property type="protein sequence ID" value="ABK71377.1"/>
    <property type="molecule type" value="Genomic_DNA"/>
</dbReference>
<dbReference type="EMBL" id="CP001663">
    <property type="protein sequence ID" value="AFP41257.1"/>
    <property type="molecule type" value="Genomic_DNA"/>
</dbReference>
<dbReference type="RefSeq" id="WP_003896331.1">
    <property type="nucleotide sequence ID" value="NZ_SIJM01000067.1"/>
</dbReference>
<dbReference type="RefSeq" id="YP_889191.1">
    <property type="nucleotide sequence ID" value="NC_008596.1"/>
</dbReference>
<dbReference type="PDB" id="7JG5">
    <property type="method" value="EM"/>
    <property type="resolution" value="3.40 A"/>
    <property type="chains" value="d=1-445"/>
</dbReference>
<dbReference type="PDB" id="7JG6">
    <property type="method" value="EM"/>
    <property type="resolution" value="3.70 A"/>
    <property type="chains" value="d=1-445"/>
</dbReference>
<dbReference type="PDB" id="7JG7">
    <property type="method" value="EM"/>
    <property type="resolution" value="3.50 A"/>
    <property type="chains" value="d=1-445"/>
</dbReference>
<dbReference type="PDB" id="7JG8">
    <property type="method" value="EM"/>
    <property type="resolution" value="3.30 A"/>
    <property type="chains" value="d=1-445"/>
</dbReference>
<dbReference type="PDB" id="7JG9">
    <property type="method" value="EM"/>
    <property type="resolution" value="3.40 A"/>
    <property type="chains" value="d=1-445"/>
</dbReference>
<dbReference type="PDB" id="7JGA">
    <property type="method" value="EM"/>
    <property type="resolution" value="3.20 A"/>
    <property type="chains" value="d=1-445"/>
</dbReference>
<dbReference type="PDB" id="7JGB">
    <property type="method" value="EM"/>
    <property type="resolution" value="3.50 A"/>
    <property type="chains" value="d=1-445"/>
</dbReference>
<dbReference type="PDB" id="7JGC">
    <property type="method" value="EM"/>
    <property type="resolution" value="3.40 A"/>
    <property type="chains" value="d=1-445"/>
</dbReference>
<dbReference type="PDB" id="7NJK">
    <property type="method" value="EM"/>
    <property type="resolution" value="2.52 A"/>
    <property type="chains" value="d=1-445"/>
</dbReference>
<dbReference type="PDB" id="7NJL">
    <property type="method" value="EM"/>
    <property type="resolution" value="2.71 A"/>
    <property type="chains" value="d=1-445"/>
</dbReference>
<dbReference type="PDB" id="7NJM">
    <property type="method" value="EM"/>
    <property type="resolution" value="2.84 A"/>
    <property type="chains" value="d=1-445"/>
</dbReference>
<dbReference type="PDB" id="7NJN">
    <property type="method" value="EM"/>
    <property type="resolution" value="2.64 A"/>
    <property type="chains" value="d=1-445"/>
</dbReference>
<dbReference type="PDB" id="7NJO">
    <property type="method" value="EM"/>
    <property type="resolution" value="2.92 A"/>
    <property type="chains" value="d=1-445"/>
</dbReference>
<dbReference type="PDB" id="7NJP">
    <property type="method" value="EM"/>
    <property type="resolution" value="2.84 A"/>
    <property type="chains" value="d=1-445"/>
</dbReference>
<dbReference type="PDB" id="7NJQ">
    <property type="method" value="EM"/>
    <property type="resolution" value="2.67 A"/>
    <property type="chains" value="d=1-445"/>
</dbReference>
<dbReference type="PDB" id="7NJR">
    <property type="method" value="EM"/>
    <property type="resolution" value="2.56 A"/>
    <property type="chains" value="d=1-445"/>
</dbReference>
<dbReference type="PDB" id="7NJS">
    <property type="method" value="EM"/>
    <property type="resolution" value="2.46 A"/>
    <property type="chains" value="d=1-445"/>
</dbReference>
<dbReference type="PDB" id="7NJT">
    <property type="method" value="EM"/>
    <property type="resolution" value="2.75 A"/>
    <property type="chains" value="d=1-445"/>
</dbReference>
<dbReference type="PDB" id="7NJU">
    <property type="method" value="EM"/>
    <property type="resolution" value="3.74 A"/>
    <property type="chains" value="d=1-445"/>
</dbReference>
<dbReference type="PDB" id="7NJV">
    <property type="method" value="EM"/>
    <property type="resolution" value="2.90 A"/>
    <property type="chains" value="d=1-445"/>
</dbReference>
<dbReference type="PDB" id="7NJW">
    <property type="method" value="EM"/>
    <property type="resolution" value="3.67 A"/>
    <property type="chains" value="d=1-445"/>
</dbReference>
<dbReference type="PDB" id="7NJX">
    <property type="method" value="EM"/>
    <property type="resolution" value="4.32 A"/>
    <property type="chains" value="d=1-445"/>
</dbReference>
<dbReference type="PDB" id="7NJY">
    <property type="method" value="EM"/>
    <property type="resolution" value="2.94 A"/>
    <property type="chains" value="d=1-445"/>
</dbReference>
<dbReference type="PDB" id="7NK9">
    <property type="method" value="EM"/>
    <property type="resolution" value="2.90 A"/>
    <property type="chains" value="d=1-445"/>
</dbReference>
<dbReference type="PDB" id="7NKD">
    <property type="method" value="EM"/>
    <property type="resolution" value="3.12 A"/>
    <property type="chains" value="d=1-445"/>
</dbReference>
<dbReference type="PDB" id="7NKL">
    <property type="method" value="EM"/>
    <property type="resolution" value="3.67 A"/>
    <property type="chains" value="d=1-445"/>
</dbReference>
<dbReference type="PDB" id="7NKP">
    <property type="method" value="EM"/>
    <property type="resolution" value="4.06 A"/>
    <property type="chains" value="d=1-445"/>
</dbReference>
<dbReference type="PDB" id="7NKQ">
    <property type="method" value="EM"/>
    <property type="resolution" value="2.98 A"/>
    <property type="chains" value="d=1-445"/>
</dbReference>
<dbReference type="PDB" id="7NL9">
    <property type="method" value="EM"/>
    <property type="resolution" value="2.86 A"/>
    <property type="chains" value="d=1-445"/>
</dbReference>
<dbReference type="PDB" id="7Y5B">
    <property type="method" value="EM"/>
    <property type="resolution" value="4.40 A"/>
    <property type="chains" value="d=1-445"/>
</dbReference>
<dbReference type="PDB" id="7Y5C">
    <property type="method" value="EM"/>
    <property type="resolution" value="4.70 A"/>
    <property type="chains" value="d=1-445"/>
</dbReference>
<dbReference type="PDB" id="7Y5D">
    <property type="method" value="EM"/>
    <property type="resolution" value="7.30 A"/>
    <property type="chains" value="d=1-445"/>
</dbReference>
<dbReference type="PDB" id="8G07">
    <property type="method" value="EM"/>
    <property type="resolution" value="2.80 A"/>
    <property type="chains" value="d=1-445"/>
</dbReference>
<dbReference type="PDB" id="8G08">
    <property type="method" value="EM"/>
    <property type="resolution" value="2.80 A"/>
    <property type="chains" value="d=1-445"/>
</dbReference>
<dbReference type="PDB" id="8G09">
    <property type="method" value="EM"/>
    <property type="resolution" value="3.10 A"/>
    <property type="chains" value="d=1-445"/>
</dbReference>
<dbReference type="PDB" id="8G0A">
    <property type="method" value="EM"/>
    <property type="resolution" value="2.90 A"/>
    <property type="chains" value="d=1-445"/>
</dbReference>
<dbReference type="PDB" id="8G0B">
    <property type="method" value="EM"/>
    <property type="resolution" value="2.80 A"/>
    <property type="chains" value="d=1-445"/>
</dbReference>
<dbReference type="PDB" id="8G0C">
    <property type="method" value="EM"/>
    <property type="resolution" value="2.80 A"/>
    <property type="chains" value="d=1-445"/>
</dbReference>
<dbReference type="PDB" id="8G0D">
    <property type="method" value="EM"/>
    <property type="resolution" value="2.90 A"/>
    <property type="chains" value="d=1-445"/>
</dbReference>
<dbReference type="PDB" id="8G0E">
    <property type="method" value="EM"/>
    <property type="resolution" value="2.60 A"/>
    <property type="chains" value="d=1-445"/>
</dbReference>
<dbReference type="PDBsum" id="7JG5"/>
<dbReference type="PDBsum" id="7JG6"/>
<dbReference type="PDBsum" id="7JG7"/>
<dbReference type="PDBsum" id="7JG8"/>
<dbReference type="PDBsum" id="7JG9"/>
<dbReference type="PDBsum" id="7JGA"/>
<dbReference type="PDBsum" id="7JGB"/>
<dbReference type="PDBsum" id="7JGC"/>
<dbReference type="PDBsum" id="7NJK"/>
<dbReference type="PDBsum" id="7NJL"/>
<dbReference type="PDBsum" id="7NJM"/>
<dbReference type="PDBsum" id="7NJN"/>
<dbReference type="PDBsum" id="7NJO"/>
<dbReference type="PDBsum" id="7NJP"/>
<dbReference type="PDBsum" id="7NJQ"/>
<dbReference type="PDBsum" id="7NJR"/>
<dbReference type="PDBsum" id="7NJS"/>
<dbReference type="PDBsum" id="7NJT"/>
<dbReference type="PDBsum" id="7NJU"/>
<dbReference type="PDBsum" id="7NJV"/>
<dbReference type="PDBsum" id="7NJW"/>
<dbReference type="PDBsum" id="7NJX"/>
<dbReference type="PDBsum" id="7NJY"/>
<dbReference type="PDBsum" id="7NK9"/>
<dbReference type="PDBsum" id="7NKD"/>
<dbReference type="PDBsum" id="7NKL"/>
<dbReference type="PDBsum" id="7NKP"/>
<dbReference type="PDBsum" id="7NKQ"/>
<dbReference type="PDBsum" id="7NL9"/>
<dbReference type="PDBsum" id="7Y5B"/>
<dbReference type="PDBsum" id="7Y5C"/>
<dbReference type="PDBsum" id="7Y5D"/>
<dbReference type="PDBsum" id="8G07"/>
<dbReference type="PDBsum" id="8G08"/>
<dbReference type="PDBsum" id="8G09"/>
<dbReference type="PDBsum" id="8G0A"/>
<dbReference type="PDBsum" id="8G0B"/>
<dbReference type="PDBsum" id="8G0C"/>
<dbReference type="PDBsum" id="8G0D"/>
<dbReference type="PDBsum" id="8G0E"/>
<dbReference type="EMDB" id="EMD-12377"/>
<dbReference type="EMDB" id="EMD-12382"/>
<dbReference type="EMDB" id="EMD-12387"/>
<dbReference type="EMDB" id="EMD-12392"/>
<dbReference type="EMDB" id="EMD-12397"/>
<dbReference type="EMDB" id="EMD-12402"/>
<dbReference type="EMDB" id="EMD-12407"/>
<dbReference type="EMDB" id="EMD-12412"/>
<dbReference type="EMDB" id="EMD-12417"/>
<dbReference type="EMDB" id="EMD-12422"/>
<dbReference type="EMDB" id="EMD-12423"/>
<dbReference type="EMDB" id="EMD-12424"/>
<dbReference type="EMDB" id="EMD-12425"/>
<dbReference type="EMDB" id="EMD-12426"/>
<dbReference type="EMDB" id="EMD-12427"/>
<dbReference type="EMDB" id="EMD-12434"/>
<dbReference type="EMDB" id="EMD-12438"/>
<dbReference type="EMDB" id="EMD-12446"/>
<dbReference type="EMDB" id="EMD-12461"/>
<dbReference type="EMDB" id="EMD-22311"/>
<dbReference type="EMDB" id="EMD-22312"/>
<dbReference type="EMDB" id="EMD-22313"/>
<dbReference type="EMDB" id="EMD-22314"/>
<dbReference type="EMDB" id="EMD-22315"/>
<dbReference type="EMDB" id="EMD-22316"/>
<dbReference type="EMDB" id="EMD-22320"/>
<dbReference type="EMDB" id="EMD-22321"/>
<dbReference type="EMDB" id="EMD-29648"/>
<dbReference type="EMDB" id="EMD-29649"/>
<dbReference type="EMDB" id="EMD-29650"/>
<dbReference type="EMDB" id="EMD-29651"/>
<dbReference type="EMDB" id="EMD-29652"/>
<dbReference type="EMDB" id="EMD-29653"/>
<dbReference type="EMDB" id="EMD-29654"/>
<dbReference type="EMDB" id="EMD-29655"/>
<dbReference type="EMDB" id="EMD-33615"/>
<dbReference type="EMDB" id="EMD-33616"/>
<dbReference type="EMDB" id="EMD-33617"/>
<dbReference type="SMR" id="A0R203"/>
<dbReference type="STRING" id="246196.MSMEG_4939"/>
<dbReference type="PaxDb" id="246196-MSMEI_4812"/>
<dbReference type="KEGG" id="msb:LJ00_24425"/>
<dbReference type="KEGG" id="msg:MSMEI_4812"/>
<dbReference type="KEGG" id="msm:MSMEG_4939"/>
<dbReference type="PATRIC" id="fig|246196.19.peg.4818"/>
<dbReference type="eggNOG" id="COG0711">
    <property type="taxonomic scope" value="Bacteria"/>
</dbReference>
<dbReference type="eggNOG" id="COG0712">
    <property type="taxonomic scope" value="Bacteria"/>
</dbReference>
<dbReference type="OrthoDB" id="5242917at2"/>
<dbReference type="Proteomes" id="UP000000757">
    <property type="component" value="Chromosome"/>
</dbReference>
<dbReference type="Proteomes" id="UP000006158">
    <property type="component" value="Chromosome"/>
</dbReference>
<dbReference type="GO" id="GO:0005886">
    <property type="term" value="C:plasma membrane"/>
    <property type="evidence" value="ECO:0007669"/>
    <property type="project" value="UniProtKB-SubCell"/>
</dbReference>
<dbReference type="GO" id="GO:0045259">
    <property type="term" value="C:proton-transporting ATP synthase complex"/>
    <property type="evidence" value="ECO:0007669"/>
    <property type="project" value="UniProtKB-KW"/>
</dbReference>
<dbReference type="GO" id="GO:0046933">
    <property type="term" value="F:proton-transporting ATP synthase activity, rotational mechanism"/>
    <property type="evidence" value="ECO:0007669"/>
    <property type="project" value="UniProtKB-UniRule"/>
</dbReference>
<dbReference type="CDD" id="cd06503">
    <property type="entry name" value="ATP-synt_Fo_b"/>
    <property type="match status" value="1"/>
</dbReference>
<dbReference type="HAMAP" id="MF_01398">
    <property type="entry name" value="ATP_synth_b_bprime"/>
    <property type="match status" value="1"/>
</dbReference>
<dbReference type="HAMAP" id="MF_01416">
    <property type="entry name" value="ATP_synth_delta_bact"/>
    <property type="match status" value="1"/>
</dbReference>
<dbReference type="InterPro" id="IPR028987">
    <property type="entry name" value="ATP_synth_B-like_membr_sf"/>
</dbReference>
<dbReference type="InterPro" id="IPR002146">
    <property type="entry name" value="ATP_synth_b/b'su_bac/chlpt"/>
</dbReference>
<dbReference type="InterPro" id="IPR000711">
    <property type="entry name" value="ATPase_OSCP/dsu"/>
</dbReference>
<dbReference type="NCBIfam" id="NF009961">
    <property type="entry name" value="PRK13428.1"/>
    <property type="match status" value="1"/>
</dbReference>
<dbReference type="NCBIfam" id="NF009967">
    <property type="entry name" value="PRK13430.1"/>
    <property type="match status" value="1"/>
</dbReference>
<dbReference type="PANTHER" id="PTHR11910">
    <property type="entry name" value="ATP SYNTHASE DELTA CHAIN"/>
    <property type="match status" value="1"/>
</dbReference>
<dbReference type="Pfam" id="PF00430">
    <property type="entry name" value="ATP-synt_B"/>
    <property type="match status" value="1"/>
</dbReference>
<dbReference type="Pfam" id="PF00213">
    <property type="entry name" value="OSCP"/>
    <property type="match status" value="1"/>
</dbReference>
<dbReference type="SUPFAM" id="SSF81573">
    <property type="entry name" value="F1F0 ATP synthase subunit B, membrane domain"/>
    <property type="match status" value="1"/>
</dbReference>
<sequence length="445" mass="47450">MSIFIGQLIGFAVIAFIIVKWVVPPVRTLMRNQQEAVRAALAESAEAAKKLADADAMHAKALADAKAESEKVTEEAKQDSERIAAQLSEQAGSEAERIKAQGAQQIQLMRQQLIRQLRTGLGAEAVNKAAEIVRAHVADPQAQSATVDRFLSELEQMAPSSVVIDTAATSRLRAASRQSLAALVEKFDSVAGGLDADGLTNLADELASVAKLLLSETALNKHLAEPTDDSAPKVRLLERLLSDKVSATTLDLLRTAVSNRWSTESNLIDAVEHTARLALLKRAEIAGEVDEVEEQLFRFGRVLDAEPRLSALLSDYTTPAEGRVALLDKALTGRPGVNQTAAALLSQTVGLLRGERADEAVIDLAELAVSRRGEVVAHVSAAAELSDAQRTRLTEVLSRIYGRPVSVQLHVDPELLGGLSITVGDEVIDGSIASRLAAAQTGLPD</sequence>